<feature type="chain" id="PRO_1000006091" description="Elongation factor Ts">
    <location>
        <begin position="1"/>
        <end position="308"/>
    </location>
</feature>
<feature type="region of interest" description="Involved in Mg(2+) ion dislocation from EF-Tu" evidence="1">
    <location>
        <begin position="80"/>
        <end position="83"/>
    </location>
</feature>
<accession>Q2NBU5</accession>
<dbReference type="EMBL" id="CP000157">
    <property type="protein sequence ID" value="ABC62846.1"/>
    <property type="molecule type" value="Genomic_DNA"/>
</dbReference>
<dbReference type="RefSeq" id="WP_011413722.1">
    <property type="nucleotide sequence ID" value="NC_007722.1"/>
</dbReference>
<dbReference type="SMR" id="Q2NBU5"/>
<dbReference type="STRING" id="314225.ELI_03770"/>
<dbReference type="KEGG" id="eli:ELI_03770"/>
<dbReference type="eggNOG" id="COG0264">
    <property type="taxonomic scope" value="Bacteria"/>
</dbReference>
<dbReference type="HOGENOM" id="CLU_047155_2_0_5"/>
<dbReference type="OrthoDB" id="9808348at2"/>
<dbReference type="Proteomes" id="UP000008808">
    <property type="component" value="Chromosome"/>
</dbReference>
<dbReference type="GO" id="GO:0005737">
    <property type="term" value="C:cytoplasm"/>
    <property type="evidence" value="ECO:0007669"/>
    <property type="project" value="UniProtKB-SubCell"/>
</dbReference>
<dbReference type="GO" id="GO:0003746">
    <property type="term" value="F:translation elongation factor activity"/>
    <property type="evidence" value="ECO:0007669"/>
    <property type="project" value="UniProtKB-UniRule"/>
</dbReference>
<dbReference type="CDD" id="cd14275">
    <property type="entry name" value="UBA_EF-Ts"/>
    <property type="match status" value="1"/>
</dbReference>
<dbReference type="FunFam" id="1.10.286.20:FF:000001">
    <property type="entry name" value="Elongation factor Ts"/>
    <property type="match status" value="1"/>
</dbReference>
<dbReference type="FunFam" id="1.10.8.10:FF:000001">
    <property type="entry name" value="Elongation factor Ts"/>
    <property type="match status" value="1"/>
</dbReference>
<dbReference type="Gene3D" id="1.10.286.20">
    <property type="match status" value="1"/>
</dbReference>
<dbReference type="Gene3D" id="1.10.8.10">
    <property type="entry name" value="DNA helicase RuvA subunit, C-terminal domain"/>
    <property type="match status" value="1"/>
</dbReference>
<dbReference type="Gene3D" id="3.30.479.20">
    <property type="entry name" value="Elongation factor Ts, dimerisation domain"/>
    <property type="match status" value="2"/>
</dbReference>
<dbReference type="HAMAP" id="MF_00050">
    <property type="entry name" value="EF_Ts"/>
    <property type="match status" value="1"/>
</dbReference>
<dbReference type="InterPro" id="IPR036402">
    <property type="entry name" value="EF-Ts_dimer_sf"/>
</dbReference>
<dbReference type="InterPro" id="IPR001816">
    <property type="entry name" value="Transl_elong_EFTs/EF1B"/>
</dbReference>
<dbReference type="InterPro" id="IPR014039">
    <property type="entry name" value="Transl_elong_EFTs/EF1B_dimer"/>
</dbReference>
<dbReference type="InterPro" id="IPR018101">
    <property type="entry name" value="Transl_elong_Ts_CS"/>
</dbReference>
<dbReference type="InterPro" id="IPR009060">
    <property type="entry name" value="UBA-like_sf"/>
</dbReference>
<dbReference type="NCBIfam" id="TIGR00116">
    <property type="entry name" value="tsf"/>
    <property type="match status" value="1"/>
</dbReference>
<dbReference type="PANTHER" id="PTHR11741">
    <property type="entry name" value="ELONGATION FACTOR TS"/>
    <property type="match status" value="1"/>
</dbReference>
<dbReference type="PANTHER" id="PTHR11741:SF0">
    <property type="entry name" value="ELONGATION FACTOR TS, MITOCHONDRIAL"/>
    <property type="match status" value="1"/>
</dbReference>
<dbReference type="Pfam" id="PF00889">
    <property type="entry name" value="EF_TS"/>
    <property type="match status" value="1"/>
</dbReference>
<dbReference type="SUPFAM" id="SSF54713">
    <property type="entry name" value="Elongation factor Ts (EF-Ts), dimerisation domain"/>
    <property type="match status" value="2"/>
</dbReference>
<dbReference type="SUPFAM" id="SSF46934">
    <property type="entry name" value="UBA-like"/>
    <property type="match status" value="1"/>
</dbReference>
<dbReference type="PROSITE" id="PS01126">
    <property type="entry name" value="EF_TS_1"/>
    <property type="match status" value="1"/>
</dbReference>
<dbReference type="PROSITE" id="PS01127">
    <property type="entry name" value="EF_TS_2"/>
    <property type="match status" value="1"/>
</dbReference>
<keyword id="KW-0963">Cytoplasm</keyword>
<keyword id="KW-0251">Elongation factor</keyword>
<keyword id="KW-0648">Protein biosynthesis</keyword>
<keyword id="KW-1185">Reference proteome</keyword>
<proteinExistence type="inferred from homology"/>
<gene>
    <name evidence="1" type="primary">tsf</name>
    <name type="ordered locus">ELI_03770</name>
</gene>
<comment type="function">
    <text evidence="1">Associates with the EF-Tu.GDP complex and induces the exchange of GDP to GTP. It remains bound to the aminoacyl-tRNA.EF-Tu.GTP complex up to the GTP hydrolysis stage on the ribosome.</text>
</comment>
<comment type="subcellular location">
    <subcellularLocation>
        <location evidence="1">Cytoplasm</location>
    </subcellularLocation>
</comment>
<comment type="similarity">
    <text evidence="1">Belongs to the EF-Ts family.</text>
</comment>
<protein>
    <recommendedName>
        <fullName evidence="1">Elongation factor Ts</fullName>
        <shortName evidence="1">EF-Ts</shortName>
    </recommendedName>
</protein>
<evidence type="ECO:0000255" key="1">
    <source>
        <dbReference type="HAMAP-Rule" id="MF_00050"/>
    </source>
</evidence>
<sequence>MAGFTAADVKKLREMSGAGMMDAKKALEETGGDLEAAVDALRAKGLAAVQKKSSRTAAEGLVGVAVEGTKGVAVEVNSETDFVAKNDQFQDFVRKTTAVALTIDGDDVEALKAADYPDGGTVTDKLTNNVATIGENQQVRRMKTVTVSQGVVVPYVHNAVAPNLGKIGVLVALESDASADVLEPLGKQLAMHIAAAFPQALDADGLDADLIERERKIAAEKAAESGKPENVQEKMVEGAIKKFAKENALLSQVFVMDNKTAIADVVLAAGKDAGTTITLKDYVRFQLGEGIEKEESDFAAEVAAAVKG</sequence>
<reference key="1">
    <citation type="journal article" date="2009" name="J. Bacteriol.">
        <title>Complete genome sequence of Erythrobacter litoralis HTCC2594.</title>
        <authorList>
            <person name="Oh H.M."/>
            <person name="Giovannoni S.J."/>
            <person name="Ferriera S."/>
            <person name="Johnson J."/>
            <person name="Cho J.C."/>
        </authorList>
    </citation>
    <scope>NUCLEOTIDE SEQUENCE [LARGE SCALE GENOMIC DNA]</scope>
    <source>
        <strain>HTCC2594</strain>
    </source>
</reference>
<organism>
    <name type="scientific">Erythrobacter litoralis (strain HTCC2594)</name>
    <dbReference type="NCBI Taxonomy" id="314225"/>
    <lineage>
        <taxon>Bacteria</taxon>
        <taxon>Pseudomonadati</taxon>
        <taxon>Pseudomonadota</taxon>
        <taxon>Alphaproteobacteria</taxon>
        <taxon>Sphingomonadales</taxon>
        <taxon>Erythrobacteraceae</taxon>
        <taxon>Erythrobacter/Porphyrobacter group</taxon>
        <taxon>Erythrobacter</taxon>
    </lineage>
</organism>
<name>EFTS_ERYLH</name>